<proteinExistence type="inferred from homology"/>
<comment type="catalytic activity">
    <reaction evidence="1">
        <text>1-(2-carboxyphenylamino)-1-deoxy-D-ribulose 5-phosphate + H(+) = (1S,2R)-1-C-(indol-3-yl)glycerol 3-phosphate + CO2 + H2O</text>
        <dbReference type="Rhea" id="RHEA:23476"/>
        <dbReference type="ChEBI" id="CHEBI:15377"/>
        <dbReference type="ChEBI" id="CHEBI:15378"/>
        <dbReference type="ChEBI" id="CHEBI:16526"/>
        <dbReference type="ChEBI" id="CHEBI:58613"/>
        <dbReference type="ChEBI" id="CHEBI:58866"/>
        <dbReference type="EC" id="4.1.1.48"/>
    </reaction>
</comment>
<comment type="pathway">
    <text evidence="1">Amino-acid biosynthesis; L-tryptophan biosynthesis; L-tryptophan from chorismate: step 4/5.</text>
</comment>
<comment type="similarity">
    <text evidence="1">Belongs to the TrpC family.</text>
</comment>
<keyword id="KW-0028">Amino-acid biosynthesis</keyword>
<keyword id="KW-0057">Aromatic amino acid biosynthesis</keyword>
<keyword id="KW-0210">Decarboxylase</keyword>
<keyword id="KW-0456">Lyase</keyword>
<keyword id="KW-0822">Tryptophan biosynthesis</keyword>
<dbReference type="EC" id="4.1.1.48" evidence="1"/>
<dbReference type="EMBL" id="CP001074">
    <property type="protein sequence ID" value="ACE91217.1"/>
    <property type="molecule type" value="Genomic_DNA"/>
</dbReference>
<dbReference type="SMR" id="B3Q0L3"/>
<dbReference type="KEGG" id="rec:RHECIAT_CH0002262"/>
<dbReference type="eggNOG" id="COG0134">
    <property type="taxonomic scope" value="Bacteria"/>
</dbReference>
<dbReference type="HOGENOM" id="CLU_034247_2_0_5"/>
<dbReference type="UniPathway" id="UPA00035">
    <property type="reaction ID" value="UER00043"/>
</dbReference>
<dbReference type="Proteomes" id="UP000008817">
    <property type="component" value="Chromosome"/>
</dbReference>
<dbReference type="GO" id="GO:0004425">
    <property type="term" value="F:indole-3-glycerol-phosphate synthase activity"/>
    <property type="evidence" value="ECO:0007669"/>
    <property type="project" value="UniProtKB-UniRule"/>
</dbReference>
<dbReference type="GO" id="GO:0004640">
    <property type="term" value="F:phosphoribosylanthranilate isomerase activity"/>
    <property type="evidence" value="ECO:0007669"/>
    <property type="project" value="TreeGrafter"/>
</dbReference>
<dbReference type="GO" id="GO:0000162">
    <property type="term" value="P:L-tryptophan biosynthetic process"/>
    <property type="evidence" value="ECO:0007669"/>
    <property type="project" value="UniProtKB-UniRule"/>
</dbReference>
<dbReference type="CDD" id="cd00331">
    <property type="entry name" value="IGPS"/>
    <property type="match status" value="1"/>
</dbReference>
<dbReference type="FunFam" id="3.20.20.70:FF:000024">
    <property type="entry name" value="Indole-3-glycerol phosphate synthase"/>
    <property type="match status" value="1"/>
</dbReference>
<dbReference type="Gene3D" id="3.20.20.70">
    <property type="entry name" value="Aldolase class I"/>
    <property type="match status" value="1"/>
</dbReference>
<dbReference type="HAMAP" id="MF_00134_B">
    <property type="entry name" value="IGPS_B"/>
    <property type="match status" value="1"/>
</dbReference>
<dbReference type="InterPro" id="IPR013785">
    <property type="entry name" value="Aldolase_TIM"/>
</dbReference>
<dbReference type="InterPro" id="IPR045186">
    <property type="entry name" value="Indole-3-glycerol_P_synth"/>
</dbReference>
<dbReference type="InterPro" id="IPR013798">
    <property type="entry name" value="Indole-3-glycerol_P_synth_dom"/>
</dbReference>
<dbReference type="InterPro" id="IPR001468">
    <property type="entry name" value="Indole-3-GlycerolPSynthase_CS"/>
</dbReference>
<dbReference type="InterPro" id="IPR011060">
    <property type="entry name" value="RibuloseP-bd_barrel"/>
</dbReference>
<dbReference type="NCBIfam" id="NF001370">
    <property type="entry name" value="PRK00278.1-2"/>
    <property type="match status" value="1"/>
</dbReference>
<dbReference type="NCBIfam" id="NF001373">
    <property type="entry name" value="PRK00278.1-6"/>
    <property type="match status" value="1"/>
</dbReference>
<dbReference type="NCBIfam" id="NF001377">
    <property type="entry name" value="PRK00278.2-4"/>
    <property type="match status" value="1"/>
</dbReference>
<dbReference type="PANTHER" id="PTHR22854:SF2">
    <property type="entry name" value="INDOLE-3-GLYCEROL-PHOSPHATE SYNTHASE"/>
    <property type="match status" value="1"/>
</dbReference>
<dbReference type="PANTHER" id="PTHR22854">
    <property type="entry name" value="TRYPTOPHAN BIOSYNTHESIS PROTEIN"/>
    <property type="match status" value="1"/>
</dbReference>
<dbReference type="Pfam" id="PF00218">
    <property type="entry name" value="IGPS"/>
    <property type="match status" value="1"/>
</dbReference>
<dbReference type="SUPFAM" id="SSF51366">
    <property type="entry name" value="Ribulose-phoshate binding barrel"/>
    <property type="match status" value="1"/>
</dbReference>
<dbReference type="PROSITE" id="PS00614">
    <property type="entry name" value="IGPS"/>
    <property type="match status" value="1"/>
</dbReference>
<name>TRPC_RHIE6</name>
<organism>
    <name type="scientific">Rhizobium etli (strain CIAT 652)</name>
    <dbReference type="NCBI Taxonomy" id="491916"/>
    <lineage>
        <taxon>Bacteria</taxon>
        <taxon>Pseudomonadati</taxon>
        <taxon>Pseudomonadota</taxon>
        <taxon>Alphaproteobacteria</taxon>
        <taxon>Hyphomicrobiales</taxon>
        <taxon>Rhizobiaceae</taxon>
        <taxon>Rhizobium/Agrobacterium group</taxon>
        <taxon>Rhizobium</taxon>
    </lineage>
</organism>
<protein>
    <recommendedName>
        <fullName evidence="1">Indole-3-glycerol phosphate synthase</fullName>
        <shortName evidence="1">IGPS</shortName>
        <ecNumber evidence="1">4.1.1.48</ecNumber>
    </recommendedName>
</protein>
<evidence type="ECO:0000255" key="1">
    <source>
        <dbReference type="HAMAP-Rule" id="MF_00134"/>
    </source>
</evidence>
<gene>
    <name evidence="1" type="primary">trpC</name>
    <name type="ordered locus">RHECIAT_CH0002262</name>
</gene>
<reference key="1">
    <citation type="journal article" date="2010" name="Appl. Environ. Microbiol.">
        <title>Conserved symbiotic plasmid DNA sequences in the multireplicon pangenomic structure of Rhizobium etli.</title>
        <authorList>
            <person name="Gonzalez V."/>
            <person name="Acosta J.L."/>
            <person name="Santamaria R.I."/>
            <person name="Bustos P."/>
            <person name="Fernandez J.L."/>
            <person name="Hernandez Gonzalez I.L."/>
            <person name="Diaz R."/>
            <person name="Flores M."/>
            <person name="Palacios R."/>
            <person name="Mora J."/>
            <person name="Davila G."/>
        </authorList>
    </citation>
    <scope>NUCLEOTIDE SEQUENCE [LARGE SCALE GENOMIC DNA]</scope>
    <source>
        <strain>CIAT 652</strain>
    </source>
</reference>
<sequence>MSDILKKIELYKREEIAAAKATVSLADLKAMQAGQSAPRGFYQALAAKREAGHFGLIAEIKKASPSKGLIRPDFDPPALAKAYEAGGAACLSVLTDTPSFQGAPEFLTAARAACARPALRKDFMFETYQVHEARAWGADCILLIMASLTDDEAKRLQDESFSLGMDVLVEVHDAPEMERALKLSSPLIGINNRNLRTFEVSLTVSETLASMVPDDRLLVGESGIFTHADCKRLQAAGINTFLVGESLMRKDDVTAATRALLVGEAAIAAE</sequence>
<feature type="chain" id="PRO_1000095883" description="Indole-3-glycerol phosphate synthase">
    <location>
        <begin position="1"/>
        <end position="270"/>
    </location>
</feature>
<accession>B3Q0L3</accession>